<comment type="function">
    <text evidence="1">Activates the canonical Wnt signaling pathway through FZD4 and LRP5 coreceptor. Plays a central role in retinal vascularization by acting as a ligand for FZD4 that signals via stabilizing beta-catenin (CTNNB1) and activating LEF/TCF-mediated transcriptional programs. Acts in concert with TSPAN12 to activate FZD4 independently of the Wnt-dependent activation of FZD4, suggesting the existence of a Wnt-independent signaling that also promote accumulation the beta-catenin (CTNNB1). May be involved in a pathway that regulates neural cell differentiation and proliferation. Possible role in neuroectodermal cell-cell interaction (By similarity).</text>
</comment>
<comment type="subunit">
    <text evidence="2">Homodimer; disulfide-linked. Component of a complex, at least composed of TSPAN12, FZD4, LRP5/6 and norrin (NDP). Binds FZD4 with high affinity. Interacts with LRP6 (via Beta-propellers 1 and 2).</text>
</comment>
<comment type="subcellular location">
    <subcellularLocation>
        <location evidence="1">Secreted</location>
    </subcellularLocation>
</comment>
<gene>
    <name type="primary">NDP</name>
    <name type="ORF">QflA-19459</name>
    <name type="ORF">QtrA-10693</name>
</gene>
<feature type="signal peptide" evidence="3">
    <location>
        <begin position="1"/>
        <end position="24"/>
    </location>
</feature>
<feature type="chain" id="PRO_0000021795" description="Norrin">
    <location>
        <begin position="25"/>
        <end position="133"/>
    </location>
</feature>
<feature type="domain" description="CTCK" evidence="4">
    <location>
        <begin position="39"/>
        <end position="132"/>
    </location>
</feature>
<feature type="disulfide bond" evidence="2">
    <location>
        <begin position="39"/>
        <end position="96"/>
    </location>
</feature>
<feature type="disulfide bond" evidence="2">
    <location>
        <begin position="55"/>
        <end position="110"/>
    </location>
</feature>
<feature type="disulfide bond" evidence="2">
    <location>
        <begin position="65"/>
        <end position="126"/>
    </location>
</feature>
<feature type="disulfide bond" evidence="2">
    <location>
        <begin position="69"/>
        <end position="128"/>
    </location>
</feature>
<feature type="disulfide bond" description="Interchain (with C-95)" evidence="2">
    <location>
        <position position="93"/>
    </location>
</feature>
<feature type="disulfide bond" description="Interchain (with C-93)" evidence="2">
    <location>
        <position position="95"/>
    </location>
</feature>
<feature type="disulfide bond" description="Interchain" evidence="2">
    <location>
        <position position="131"/>
    </location>
</feature>
<proteinExistence type="evidence at transcript level"/>
<keyword id="KW-1015">Disulfide bond</keyword>
<keyword id="KW-1185">Reference proteome</keyword>
<keyword id="KW-0964">Secreted</keyword>
<keyword id="KW-0732">Signal</keyword>
<keyword id="KW-0879">Wnt signaling pathway</keyword>
<dbReference type="EMBL" id="AB125183">
    <property type="protein sequence ID" value="BAD51971.1"/>
    <property type="molecule type" value="mRNA"/>
</dbReference>
<dbReference type="EMBL" id="AB169761">
    <property type="protein sequence ID" value="BAE01842.1"/>
    <property type="molecule type" value="mRNA"/>
</dbReference>
<dbReference type="RefSeq" id="NP_001272185.1">
    <property type="nucleotide sequence ID" value="NM_001285256.1"/>
</dbReference>
<dbReference type="RefSeq" id="XP_045239353.1">
    <property type="nucleotide sequence ID" value="XM_045383418.2"/>
</dbReference>
<dbReference type="RefSeq" id="XP_045239354.1">
    <property type="nucleotide sequence ID" value="XM_045383419.2"/>
</dbReference>
<dbReference type="SMR" id="Q60HE4"/>
<dbReference type="STRING" id="9541.ENSMFAP00000045528"/>
<dbReference type="Ensembl" id="ENSMFAT00000019832.2">
    <property type="protein sequence ID" value="ENSMFAP00000045528.1"/>
    <property type="gene ID" value="ENSMFAG00000000487.2"/>
</dbReference>
<dbReference type="GeneID" id="102117357"/>
<dbReference type="VEuPathDB" id="HostDB:ENSMFAG00000000487"/>
<dbReference type="eggNOG" id="KOG1216">
    <property type="taxonomic scope" value="Eukaryota"/>
</dbReference>
<dbReference type="GeneTree" id="ENSGT00390000004304"/>
<dbReference type="OMA" id="NVLMARC"/>
<dbReference type="Proteomes" id="UP000233100">
    <property type="component" value="Chromosome X"/>
</dbReference>
<dbReference type="Bgee" id="ENSMFAG00000000487">
    <property type="expression patterns" value="Expressed in cerebellum and 2 other cell types or tissues"/>
</dbReference>
<dbReference type="GO" id="GO:0009986">
    <property type="term" value="C:cell surface"/>
    <property type="evidence" value="ECO:0007669"/>
    <property type="project" value="Ensembl"/>
</dbReference>
<dbReference type="GO" id="GO:0005615">
    <property type="term" value="C:extracellular space"/>
    <property type="evidence" value="ECO:0007669"/>
    <property type="project" value="Ensembl"/>
</dbReference>
<dbReference type="GO" id="GO:0005125">
    <property type="term" value="F:cytokine activity"/>
    <property type="evidence" value="ECO:0007669"/>
    <property type="project" value="Ensembl"/>
</dbReference>
<dbReference type="GO" id="GO:0005109">
    <property type="term" value="F:frizzled binding"/>
    <property type="evidence" value="ECO:0007669"/>
    <property type="project" value="Ensembl"/>
</dbReference>
<dbReference type="GO" id="GO:0042803">
    <property type="term" value="F:protein homodimerization activity"/>
    <property type="evidence" value="ECO:0007669"/>
    <property type="project" value="Ensembl"/>
</dbReference>
<dbReference type="GO" id="GO:0001508">
    <property type="term" value="P:action potential"/>
    <property type="evidence" value="ECO:0007669"/>
    <property type="project" value="Ensembl"/>
</dbReference>
<dbReference type="GO" id="GO:0001525">
    <property type="term" value="P:angiogenesis"/>
    <property type="evidence" value="ECO:0007669"/>
    <property type="project" value="Ensembl"/>
</dbReference>
<dbReference type="GO" id="GO:0001974">
    <property type="term" value="P:blood vessel remodeling"/>
    <property type="evidence" value="ECO:0007669"/>
    <property type="project" value="Ensembl"/>
</dbReference>
<dbReference type="GO" id="GO:0060070">
    <property type="term" value="P:canonical Wnt signaling pathway"/>
    <property type="evidence" value="ECO:0007669"/>
    <property type="project" value="Ensembl"/>
</dbReference>
<dbReference type="GO" id="GO:0071456">
    <property type="term" value="P:cellular response to hypoxia"/>
    <property type="evidence" value="ECO:0007669"/>
    <property type="project" value="Ensembl"/>
</dbReference>
<dbReference type="GO" id="GO:1904390">
    <property type="term" value="P:cone retinal bipolar cell differentiation"/>
    <property type="evidence" value="ECO:0007669"/>
    <property type="project" value="Ensembl"/>
</dbReference>
<dbReference type="GO" id="GO:0060996">
    <property type="term" value="P:dendritic spine development"/>
    <property type="evidence" value="ECO:0007669"/>
    <property type="project" value="Ensembl"/>
</dbReference>
<dbReference type="GO" id="GO:0045446">
    <property type="term" value="P:endothelial cell differentiation"/>
    <property type="evidence" value="ECO:0007669"/>
    <property type="project" value="Ensembl"/>
</dbReference>
<dbReference type="GO" id="GO:0060856">
    <property type="term" value="P:establishment of blood-brain barrier"/>
    <property type="evidence" value="ECO:0007669"/>
    <property type="project" value="Ensembl"/>
</dbReference>
<dbReference type="GO" id="GO:1990963">
    <property type="term" value="P:establishment of blood-retinal barrier"/>
    <property type="evidence" value="ECO:0007669"/>
    <property type="project" value="Ensembl"/>
</dbReference>
<dbReference type="GO" id="GO:0035640">
    <property type="term" value="P:exploration behavior"/>
    <property type="evidence" value="ECO:0007669"/>
    <property type="project" value="Ensembl"/>
</dbReference>
<dbReference type="GO" id="GO:0035426">
    <property type="term" value="P:extracellular matrix-cell signaling"/>
    <property type="evidence" value="ECO:0007669"/>
    <property type="project" value="Ensembl"/>
</dbReference>
<dbReference type="GO" id="GO:0006749">
    <property type="term" value="P:glutathione metabolic process"/>
    <property type="evidence" value="ECO:0007669"/>
    <property type="project" value="Ensembl"/>
</dbReference>
<dbReference type="GO" id="GO:0006544">
    <property type="term" value="P:glycine metabolic process"/>
    <property type="evidence" value="ECO:0007669"/>
    <property type="project" value="Ensembl"/>
</dbReference>
<dbReference type="GO" id="GO:0006954">
    <property type="term" value="P:inflammatory response"/>
    <property type="evidence" value="ECO:0007669"/>
    <property type="project" value="Ensembl"/>
</dbReference>
<dbReference type="GO" id="GO:0002088">
    <property type="term" value="P:lens development in camera-type eye"/>
    <property type="evidence" value="ECO:0007669"/>
    <property type="project" value="Ensembl"/>
</dbReference>
<dbReference type="GO" id="GO:0014004">
    <property type="term" value="P:microglia differentiation"/>
    <property type="evidence" value="ECO:0007669"/>
    <property type="project" value="Ensembl"/>
</dbReference>
<dbReference type="GO" id="GO:0061518">
    <property type="term" value="P:microglial cell proliferation"/>
    <property type="evidence" value="ECO:0007669"/>
    <property type="project" value="Ensembl"/>
</dbReference>
<dbReference type="GO" id="GO:0000278">
    <property type="term" value="P:mitotic cell cycle"/>
    <property type="evidence" value="ECO:0007669"/>
    <property type="project" value="Ensembl"/>
</dbReference>
<dbReference type="GO" id="GO:0051402">
    <property type="term" value="P:neuron apoptotic process"/>
    <property type="evidence" value="ECO:0007669"/>
    <property type="project" value="Ensembl"/>
</dbReference>
<dbReference type="GO" id="GO:0110135">
    <property type="term" value="P:Norrin signaling pathway"/>
    <property type="evidence" value="ECO:0007669"/>
    <property type="project" value="Ensembl"/>
</dbReference>
<dbReference type="GO" id="GO:0021554">
    <property type="term" value="P:optic nerve development"/>
    <property type="evidence" value="ECO:0007669"/>
    <property type="project" value="Ensembl"/>
</dbReference>
<dbReference type="GO" id="GO:0001890">
    <property type="term" value="P:placenta development"/>
    <property type="evidence" value="ECO:0007669"/>
    <property type="project" value="Ensembl"/>
</dbReference>
<dbReference type="GO" id="GO:0051897">
    <property type="term" value="P:positive regulation of phosphatidylinositol 3-kinase/protein kinase B signal transduction"/>
    <property type="evidence" value="ECO:0007669"/>
    <property type="project" value="Ensembl"/>
</dbReference>
<dbReference type="GO" id="GO:0045944">
    <property type="term" value="P:positive regulation of transcription by RNA polymerase II"/>
    <property type="evidence" value="ECO:0007669"/>
    <property type="project" value="Ensembl"/>
</dbReference>
<dbReference type="GO" id="GO:0006622">
    <property type="term" value="P:protein targeting to lysosome"/>
    <property type="evidence" value="ECO:0007669"/>
    <property type="project" value="Ensembl"/>
</dbReference>
<dbReference type="GO" id="GO:0016567">
    <property type="term" value="P:protein ubiquitination"/>
    <property type="evidence" value="ECO:0007669"/>
    <property type="project" value="Ensembl"/>
</dbReference>
<dbReference type="GO" id="GO:0000320">
    <property type="term" value="P:re-entry into mitotic cell cycle"/>
    <property type="evidence" value="ECO:0007669"/>
    <property type="project" value="Ensembl"/>
</dbReference>
<dbReference type="GO" id="GO:0048678">
    <property type="term" value="P:response to axon injury"/>
    <property type="evidence" value="ECO:0007669"/>
    <property type="project" value="Ensembl"/>
</dbReference>
<dbReference type="GO" id="GO:0097601">
    <property type="term" value="P:retina blood vessel maintenance"/>
    <property type="evidence" value="ECO:0007669"/>
    <property type="project" value="Ensembl"/>
</dbReference>
<dbReference type="GO" id="GO:0010842">
    <property type="term" value="P:retina layer formation"/>
    <property type="evidence" value="ECO:0007669"/>
    <property type="project" value="Ensembl"/>
</dbReference>
<dbReference type="GO" id="GO:0061304">
    <property type="term" value="P:retinal blood vessel morphogenesis"/>
    <property type="evidence" value="ECO:0007669"/>
    <property type="project" value="Ensembl"/>
</dbReference>
<dbReference type="GO" id="GO:0031290">
    <property type="term" value="P:retinal ganglion cell axon guidance"/>
    <property type="evidence" value="ECO:0007669"/>
    <property type="project" value="Ensembl"/>
</dbReference>
<dbReference type="GO" id="GO:0003406">
    <property type="term" value="P:retinal pigment epithelium development"/>
    <property type="evidence" value="ECO:0007669"/>
    <property type="project" value="Ensembl"/>
</dbReference>
<dbReference type="GO" id="GO:0060221">
    <property type="term" value="P:retinal rod cell differentiation"/>
    <property type="evidence" value="ECO:0007669"/>
    <property type="project" value="Ensembl"/>
</dbReference>
<dbReference type="GO" id="GO:0007224">
    <property type="term" value="P:smoothened signaling pathway"/>
    <property type="evidence" value="ECO:0007669"/>
    <property type="project" value="Ensembl"/>
</dbReference>
<dbReference type="GO" id="GO:0006366">
    <property type="term" value="P:transcription by RNA polymerase II"/>
    <property type="evidence" value="ECO:0007669"/>
    <property type="project" value="Ensembl"/>
</dbReference>
<dbReference type="GO" id="GO:0007179">
    <property type="term" value="P:transforming growth factor beta receptor signaling pathway"/>
    <property type="evidence" value="ECO:0007669"/>
    <property type="project" value="Ensembl"/>
</dbReference>
<dbReference type="GO" id="GO:0006099">
    <property type="term" value="P:tricarboxylic acid cycle"/>
    <property type="evidence" value="ECO:0007669"/>
    <property type="project" value="Ensembl"/>
</dbReference>
<dbReference type="GO" id="GO:0070086">
    <property type="term" value="P:ubiquitin-dependent endocytosis"/>
    <property type="evidence" value="ECO:0007669"/>
    <property type="project" value="Ensembl"/>
</dbReference>
<dbReference type="FunFam" id="2.10.90.10:FF:000022">
    <property type="entry name" value="Norrin"/>
    <property type="match status" value="1"/>
</dbReference>
<dbReference type="Gene3D" id="2.10.90.10">
    <property type="entry name" value="Cystine-knot cytokines"/>
    <property type="match status" value="1"/>
</dbReference>
<dbReference type="InterPro" id="IPR006207">
    <property type="entry name" value="Cys_knot_C"/>
</dbReference>
<dbReference type="InterPro" id="IPR029034">
    <property type="entry name" value="Cystine-knot_cytokine"/>
</dbReference>
<dbReference type="InterPro" id="IPR006208">
    <property type="entry name" value="Glyco_hormone_CN"/>
</dbReference>
<dbReference type="InterPro" id="IPR003064">
    <property type="entry name" value="Norrie_dis"/>
</dbReference>
<dbReference type="PANTHER" id="PTHR28611">
    <property type="entry name" value="NORRIN"/>
    <property type="match status" value="1"/>
</dbReference>
<dbReference type="PANTHER" id="PTHR28611:SF1">
    <property type="entry name" value="NORRIN"/>
    <property type="match status" value="1"/>
</dbReference>
<dbReference type="Pfam" id="PF00007">
    <property type="entry name" value="Cys_knot"/>
    <property type="match status" value="1"/>
</dbReference>
<dbReference type="PRINTS" id="PR01304">
    <property type="entry name" value="NORRIEDSEASE"/>
</dbReference>
<dbReference type="SMART" id="SM00041">
    <property type="entry name" value="CT"/>
    <property type="match status" value="1"/>
</dbReference>
<dbReference type="PROSITE" id="PS01185">
    <property type="entry name" value="CTCK_1"/>
    <property type="match status" value="1"/>
</dbReference>
<dbReference type="PROSITE" id="PS01225">
    <property type="entry name" value="CTCK_2"/>
    <property type="match status" value="1"/>
</dbReference>
<reference key="1">
    <citation type="submission" date="2003-10" db="EMBL/GenBank/DDBJ databases">
        <title>Isolation and characterization of cDNA for macaque neurological disease genes.</title>
        <authorList>
            <person name="Kusuda J."/>
            <person name="Osada N."/>
            <person name="Tanuma R."/>
            <person name="Hirata M."/>
            <person name="Sugano S."/>
            <person name="Hashimoto K."/>
        </authorList>
    </citation>
    <scope>NUCLEOTIDE SEQUENCE [LARGE SCALE MRNA]</scope>
    <source>
        <tissue>Frontal cortex</tissue>
    </source>
</reference>
<reference key="2">
    <citation type="submission" date="2005-06" db="EMBL/GenBank/DDBJ databases">
        <title>DNA sequences of macaque genes expressed in brain or testis and its evolutionary implications.</title>
        <authorList>
            <consortium name="International consortium for macaque cDNA sequencing and analysis"/>
        </authorList>
    </citation>
    <scope>NUCLEOTIDE SEQUENCE [LARGE SCALE MRNA]</scope>
    <source>
        <tissue>Temporal cortex</tissue>
    </source>
</reference>
<accession>Q60HE4</accession>
<accession>Q4R4Y3</accession>
<name>NDP_MACFA</name>
<organism>
    <name type="scientific">Macaca fascicularis</name>
    <name type="common">Crab-eating macaque</name>
    <name type="synonym">Cynomolgus monkey</name>
    <dbReference type="NCBI Taxonomy" id="9541"/>
    <lineage>
        <taxon>Eukaryota</taxon>
        <taxon>Metazoa</taxon>
        <taxon>Chordata</taxon>
        <taxon>Craniata</taxon>
        <taxon>Vertebrata</taxon>
        <taxon>Euteleostomi</taxon>
        <taxon>Mammalia</taxon>
        <taxon>Eutheria</taxon>
        <taxon>Euarchontoglires</taxon>
        <taxon>Primates</taxon>
        <taxon>Haplorrhini</taxon>
        <taxon>Catarrhini</taxon>
        <taxon>Cercopithecidae</taxon>
        <taxon>Cercopithecinae</taxon>
        <taxon>Macaca</taxon>
    </lineage>
</organism>
<evidence type="ECO:0000250" key="1"/>
<evidence type="ECO:0000250" key="2">
    <source>
        <dbReference type="UniProtKB" id="Q00604"/>
    </source>
</evidence>
<evidence type="ECO:0000255" key="3"/>
<evidence type="ECO:0000255" key="4">
    <source>
        <dbReference type="PROSITE-ProRule" id="PRU00039"/>
    </source>
</evidence>
<sequence>MRKHVLAASFSMLSLLVIMGDTDSKTDSSFIMDSDPRRCMRHHYVDSISHPLYKCSSKMVLLARCEGHCSQASRSEPLVSFSTVLKQPFRSSCHCCRPQTSKLKALRLRCSGGMRLTATYRYILSCHCEECNS</sequence>
<protein>
    <recommendedName>
        <fullName>Norrin</fullName>
    </recommendedName>
    <alternativeName>
        <fullName>Norrie disease protein homolog</fullName>
    </alternativeName>
</protein>